<organism>
    <name type="scientific">Salmonella arizonae (strain ATCC BAA-731 / CDC346-86 / RSK2980)</name>
    <dbReference type="NCBI Taxonomy" id="41514"/>
    <lineage>
        <taxon>Bacteria</taxon>
        <taxon>Pseudomonadati</taxon>
        <taxon>Pseudomonadota</taxon>
        <taxon>Gammaproteobacteria</taxon>
        <taxon>Enterobacterales</taxon>
        <taxon>Enterobacteriaceae</taxon>
        <taxon>Salmonella</taxon>
    </lineage>
</organism>
<feature type="chain" id="PRO_1000075512" description="Peptide chain release factor 1">
    <location>
        <begin position="1"/>
        <end position="360"/>
    </location>
</feature>
<feature type="region of interest" description="Disordered" evidence="2">
    <location>
        <begin position="284"/>
        <end position="313"/>
    </location>
</feature>
<feature type="modified residue" description="N5-methylglutamine" evidence="1">
    <location>
        <position position="235"/>
    </location>
</feature>
<reference key="1">
    <citation type="submission" date="2007-11" db="EMBL/GenBank/DDBJ databases">
        <authorList>
            <consortium name="The Salmonella enterica serovar Arizonae Genome Sequencing Project"/>
            <person name="McClelland M."/>
            <person name="Sanderson E.K."/>
            <person name="Porwollik S."/>
            <person name="Spieth J."/>
            <person name="Clifton W.S."/>
            <person name="Fulton R."/>
            <person name="Chunyan W."/>
            <person name="Wollam A."/>
            <person name="Shah N."/>
            <person name="Pepin K."/>
            <person name="Bhonagiri V."/>
            <person name="Nash W."/>
            <person name="Johnson M."/>
            <person name="Thiruvilangam P."/>
            <person name="Wilson R."/>
        </authorList>
    </citation>
    <scope>NUCLEOTIDE SEQUENCE [LARGE SCALE GENOMIC DNA]</scope>
    <source>
        <strain>ATCC BAA-731 / CDC346-86 / RSK2980</strain>
    </source>
</reference>
<evidence type="ECO:0000255" key="1">
    <source>
        <dbReference type="HAMAP-Rule" id="MF_00093"/>
    </source>
</evidence>
<evidence type="ECO:0000256" key="2">
    <source>
        <dbReference type="SAM" id="MobiDB-lite"/>
    </source>
</evidence>
<protein>
    <recommendedName>
        <fullName evidence="1">Peptide chain release factor 1</fullName>
        <shortName evidence="1">RF-1</shortName>
    </recommendedName>
</protein>
<proteinExistence type="inferred from homology"/>
<accession>A9MPA1</accession>
<sequence length="360" mass="40475">MKPSIVAKLEALHERHEEVQALLGDAGIIADQDRFRALSREYAQLSDVSRCFTDWQQVQDDIETAQMMLDDPEMREMAQEELREAKEKSEQLEQQLQVLLLPKDPDDERNAFLEVRAGTGGDEAALFAGDLFRMYSRYAEARRWRVEIMSMSEGEHGGYKEIIAKISGEGVYGRLKFESGGHRVQRVPATESQGRIHTSACTVAVMPELPEAELPDINPADLRIDTFRSSGAGGQHVNTTDSAIRITHLPTGIVVECQDERSQHKNKAKALSVLGARIHAAETAKRQQAEASTRRNLLGSGDRSDRNRTYNFPQGRVTDHRINLTLYRLDETMEGKLDMLIEPIVQEHQADLLAALSEQE</sequence>
<name>RF1_SALAR</name>
<gene>
    <name evidence="1" type="primary">prfA</name>
    <name type="ordered locus">SARI_01177</name>
</gene>
<keyword id="KW-0963">Cytoplasm</keyword>
<keyword id="KW-0488">Methylation</keyword>
<keyword id="KW-0648">Protein biosynthesis</keyword>
<keyword id="KW-1185">Reference proteome</keyword>
<dbReference type="EMBL" id="CP000880">
    <property type="protein sequence ID" value="ABX21082.1"/>
    <property type="molecule type" value="Genomic_DNA"/>
</dbReference>
<dbReference type="SMR" id="A9MPA1"/>
<dbReference type="STRING" id="41514.SARI_01177"/>
<dbReference type="KEGG" id="ses:SARI_01177"/>
<dbReference type="HOGENOM" id="CLU_036856_0_1_6"/>
<dbReference type="Proteomes" id="UP000002084">
    <property type="component" value="Chromosome"/>
</dbReference>
<dbReference type="GO" id="GO:0005737">
    <property type="term" value="C:cytoplasm"/>
    <property type="evidence" value="ECO:0007669"/>
    <property type="project" value="UniProtKB-SubCell"/>
</dbReference>
<dbReference type="GO" id="GO:0016149">
    <property type="term" value="F:translation release factor activity, codon specific"/>
    <property type="evidence" value="ECO:0007669"/>
    <property type="project" value="UniProtKB-UniRule"/>
</dbReference>
<dbReference type="FunFam" id="3.30.160.20:FF:000004">
    <property type="entry name" value="Peptide chain release factor 1"/>
    <property type="match status" value="1"/>
</dbReference>
<dbReference type="FunFam" id="3.30.70.1660:FF:000002">
    <property type="entry name" value="Peptide chain release factor 1"/>
    <property type="match status" value="1"/>
</dbReference>
<dbReference type="FunFam" id="3.30.70.1660:FF:000004">
    <property type="entry name" value="Peptide chain release factor 1"/>
    <property type="match status" value="1"/>
</dbReference>
<dbReference type="Gene3D" id="3.30.160.20">
    <property type="match status" value="1"/>
</dbReference>
<dbReference type="Gene3D" id="3.30.70.1660">
    <property type="match status" value="2"/>
</dbReference>
<dbReference type="Gene3D" id="6.10.140.1950">
    <property type="match status" value="1"/>
</dbReference>
<dbReference type="HAMAP" id="MF_00093">
    <property type="entry name" value="Rel_fac_1"/>
    <property type="match status" value="1"/>
</dbReference>
<dbReference type="InterPro" id="IPR005139">
    <property type="entry name" value="PCRF"/>
</dbReference>
<dbReference type="InterPro" id="IPR000352">
    <property type="entry name" value="Pep_chain_release_fac_I"/>
</dbReference>
<dbReference type="InterPro" id="IPR045853">
    <property type="entry name" value="Pep_chain_release_fac_I_sf"/>
</dbReference>
<dbReference type="InterPro" id="IPR050057">
    <property type="entry name" value="Prokaryotic/Mito_RF"/>
</dbReference>
<dbReference type="InterPro" id="IPR004373">
    <property type="entry name" value="RF-1"/>
</dbReference>
<dbReference type="NCBIfam" id="TIGR00019">
    <property type="entry name" value="prfA"/>
    <property type="match status" value="1"/>
</dbReference>
<dbReference type="NCBIfam" id="NF001859">
    <property type="entry name" value="PRK00591.1"/>
    <property type="match status" value="1"/>
</dbReference>
<dbReference type="PANTHER" id="PTHR43804">
    <property type="entry name" value="LD18447P"/>
    <property type="match status" value="1"/>
</dbReference>
<dbReference type="PANTHER" id="PTHR43804:SF7">
    <property type="entry name" value="LD18447P"/>
    <property type="match status" value="1"/>
</dbReference>
<dbReference type="Pfam" id="PF03462">
    <property type="entry name" value="PCRF"/>
    <property type="match status" value="1"/>
</dbReference>
<dbReference type="Pfam" id="PF00472">
    <property type="entry name" value="RF-1"/>
    <property type="match status" value="1"/>
</dbReference>
<dbReference type="SMART" id="SM00937">
    <property type="entry name" value="PCRF"/>
    <property type="match status" value="1"/>
</dbReference>
<dbReference type="SUPFAM" id="SSF75620">
    <property type="entry name" value="Release factor"/>
    <property type="match status" value="1"/>
</dbReference>
<dbReference type="PROSITE" id="PS00745">
    <property type="entry name" value="RF_PROK_I"/>
    <property type="match status" value="1"/>
</dbReference>
<comment type="function">
    <text evidence="1">Peptide chain release factor 1 directs the termination of translation in response to the peptide chain termination codons UAG and UAA.</text>
</comment>
<comment type="subcellular location">
    <subcellularLocation>
        <location evidence="1">Cytoplasm</location>
    </subcellularLocation>
</comment>
<comment type="PTM">
    <text evidence="1">Methylated by PrmC. Methylation increases the termination efficiency of RF1.</text>
</comment>
<comment type="similarity">
    <text evidence="1">Belongs to the prokaryotic/mitochondrial release factor family.</text>
</comment>